<gene>
    <name evidence="1" type="primary">kup3</name>
    <name type="ordered locus">BBta_3513</name>
</gene>
<feature type="chain" id="PRO_0000296760" description="Probable potassium transport system protein Kup 3">
    <location>
        <begin position="1"/>
        <end position="640"/>
    </location>
</feature>
<feature type="transmembrane region" description="Helical" evidence="1">
    <location>
        <begin position="30"/>
        <end position="50"/>
    </location>
</feature>
<feature type="transmembrane region" description="Helical" evidence="1">
    <location>
        <begin position="71"/>
        <end position="91"/>
    </location>
</feature>
<feature type="transmembrane region" description="Helical" evidence="1">
    <location>
        <begin position="117"/>
        <end position="137"/>
    </location>
</feature>
<feature type="transmembrane region" description="Helical" evidence="1">
    <location>
        <begin position="155"/>
        <end position="175"/>
    </location>
</feature>
<feature type="transmembrane region" description="Helical" evidence="1">
    <location>
        <begin position="183"/>
        <end position="203"/>
    </location>
</feature>
<feature type="transmembrane region" description="Helical" evidence="1">
    <location>
        <begin position="224"/>
        <end position="244"/>
    </location>
</feature>
<feature type="transmembrane region" description="Helical" evidence="1">
    <location>
        <begin position="265"/>
        <end position="285"/>
    </location>
</feature>
<feature type="transmembrane region" description="Helical" evidence="1">
    <location>
        <begin position="294"/>
        <end position="314"/>
    </location>
</feature>
<feature type="transmembrane region" description="Helical" evidence="1">
    <location>
        <begin position="363"/>
        <end position="383"/>
    </location>
</feature>
<feature type="transmembrane region" description="Helical" evidence="1">
    <location>
        <begin position="385"/>
        <end position="405"/>
    </location>
</feature>
<feature type="transmembrane region" description="Helical" evidence="1">
    <location>
        <begin position="410"/>
        <end position="430"/>
    </location>
</feature>
<feature type="transmembrane region" description="Helical" evidence="1">
    <location>
        <begin position="437"/>
        <end position="457"/>
    </location>
</feature>
<feature type="region of interest" description="Disordered" evidence="2">
    <location>
        <begin position="1"/>
        <end position="20"/>
    </location>
</feature>
<feature type="compositionally biased region" description="Low complexity" evidence="2">
    <location>
        <begin position="1"/>
        <end position="15"/>
    </location>
</feature>
<comment type="function">
    <text evidence="1">Transport of potassium into the cell. Likely operates as a K(+):H(+) symporter.</text>
</comment>
<comment type="catalytic activity">
    <reaction evidence="1">
        <text>K(+)(in) + H(+)(in) = K(+)(out) + H(+)(out)</text>
        <dbReference type="Rhea" id="RHEA:28490"/>
        <dbReference type="ChEBI" id="CHEBI:15378"/>
        <dbReference type="ChEBI" id="CHEBI:29103"/>
    </reaction>
    <physiologicalReaction direction="right-to-left" evidence="1">
        <dbReference type="Rhea" id="RHEA:28492"/>
    </physiologicalReaction>
</comment>
<comment type="subcellular location">
    <subcellularLocation>
        <location evidence="1">Cell inner membrane</location>
        <topology evidence="1">Multi-pass membrane protein</topology>
    </subcellularLocation>
</comment>
<comment type="similarity">
    <text evidence="1">Belongs to the HAK/KUP transporter (TC 2.A.72) family.</text>
</comment>
<name>KUP3_BRASB</name>
<sequence length="640" mass="68775">MTVDAAATPAEAPATNGHGDAHSTASFTALTLGSIGVVYGDIGTSPLYALREAVTAASSSGEAAPHAVMGVISLILWALIVVVTLKYVVILLRADNHGEGGTLALMALAQRGVTRGASIIVLLGIISGALFYGDAVITPALSVLSAIEGTKLVTAAFDPYVVPLTVIILAALFAVQARGTAKVAAFFGPIMLIWFLVIGIAAFPPILRHPEVLWAINPVNAVSFMLHHGIVGFITLGAVFLAVTGAEALYADLGHFGKRPIQTAWLFVVLPSLALNYLGQGALIIADAKALENPFFLMFPEWALIPMVALATVATVIASQAVITGAYSLTRQAIQLGLLPRFEIRHTSEAHSGQIYIPRINKLLLASVVLLVLLFKSSSALASAYGISVTGTMVVTAMMGFVVIWKVWRWSPLAAGALIAPFLFLDLTFLSANLLKVLEGGWVPLALGGFVMTLMYTWRRGSRLLFEKSRKLEFPLADLVAMLEKRPPQRVPGTAVFLTSDPLSAPTALMHSLKHYKVLHEKNVILTIETAPTPRIDPSERVRLEQISPTFSKVTLRFGFMESPNVPRALAIARKLGWQFDIMSTSFFLSRRALKPAAHSGMPRWQDHLFITMSRSANDATDYFQIPSGRVVEVGTQVTI</sequence>
<dbReference type="EMBL" id="CP000494">
    <property type="protein sequence ID" value="ABQ35606.1"/>
    <property type="molecule type" value="Genomic_DNA"/>
</dbReference>
<dbReference type="RefSeq" id="WP_012043617.1">
    <property type="nucleotide sequence ID" value="NC_009485.1"/>
</dbReference>
<dbReference type="STRING" id="288000.BBta_3513"/>
<dbReference type="KEGG" id="bbt:BBta_3513"/>
<dbReference type="eggNOG" id="COG3158">
    <property type="taxonomic scope" value="Bacteria"/>
</dbReference>
<dbReference type="HOGENOM" id="CLU_008142_4_2_5"/>
<dbReference type="OrthoDB" id="9805577at2"/>
<dbReference type="Proteomes" id="UP000000246">
    <property type="component" value="Chromosome"/>
</dbReference>
<dbReference type="GO" id="GO:0005886">
    <property type="term" value="C:plasma membrane"/>
    <property type="evidence" value="ECO:0007669"/>
    <property type="project" value="UniProtKB-SubCell"/>
</dbReference>
<dbReference type="GO" id="GO:0015079">
    <property type="term" value="F:potassium ion transmembrane transporter activity"/>
    <property type="evidence" value="ECO:0007669"/>
    <property type="project" value="UniProtKB-UniRule"/>
</dbReference>
<dbReference type="GO" id="GO:0015293">
    <property type="term" value="F:symporter activity"/>
    <property type="evidence" value="ECO:0007669"/>
    <property type="project" value="UniProtKB-UniRule"/>
</dbReference>
<dbReference type="HAMAP" id="MF_01522">
    <property type="entry name" value="Kup"/>
    <property type="match status" value="1"/>
</dbReference>
<dbReference type="InterPro" id="IPR003855">
    <property type="entry name" value="K+_transporter"/>
</dbReference>
<dbReference type="InterPro" id="IPR053952">
    <property type="entry name" value="K_trans_C"/>
</dbReference>
<dbReference type="InterPro" id="IPR053951">
    <property type="entry name" value="K_trans_N"/>
</dbReference>
<dbReference type="InterPro" id="IPR023051">
    <property type="entry name" value="Kup"/>
</dbReference>
<dbReference type="PANTHER" id="PTHR30540:SF79">
    <property type="entry name" value="LOW AFFINITY POTASSIUM TRANSPORT SYSTEM PROTEIN KUP"/>
    <property type="match status" value="1"/>
</dbReference>
<dbReference type="PANTHER" id="PTHR30540">
    <property type="entry name" value="OSMOTIC STRESS POTASSIUM TRANSPORTER"/>
    <property type="match status" value="1"/>
</dbReference>
<dbReference type="Pfam" id="PF02705">
    <property type="entry name" value="K_trans"/>
    <property type="match status" value="1"/>
</dbReference>
<dbReference type="Pfam" id="PF22776">
    <property type="entry name" value="K_trans_C"/>
    <property type="match status" value="1"/>
</dbReference>
<proteinExistence type="inferred from homology"/>
<protein>
    <recommendedName>
        <fullName evidence="1">Probable potassium transport system protein Kup 3</fullName>
    </recommendedName>
</protein>
<evidence type="ECO:0000255" key="1">
    <source>
        <dbReference type="HAMAP-Rule" id="MF_01522"/>
    </source>
</evidence>
<evidence type="ECO:0000256" key="2">
    <source>
        <dbReference type="SAM" id="MobiDB-lite"/>
    </source>
</evidence>
<keyword id="KW-0997">Cell inner membrane</keyword>
<keyword id="KW-1003">Cell membrane</keyword>
<keyword id="KW-0406">Ion transport</keyword>
<keyword id="KW-0472">Membrane</keyword>
<keyword id="KW-0630">Potassium</keyword>
<keyword id="KW-0633">Potassium transport</keyword>
<keyword id="KW-1185">Reference proteome</keyword>
<keyword id="KW-0769">Symport</keyword>
<keyword id="KW-0812">Transmembrane</keyword>
<keyword id="KW-1133">Transmembrane helix</keyword>
<keyword id="KW-0813">Transport</keyword>
<organism>
    <name type="scientific">Bradyrhizobium sp. (strain BTAi1 / ATCC BAA-1182)</name>
    <dbReference type="NCBI Taxonomy" id="288000"/>
    <lineage>
        <taxon>Bacteria</taxon>
        <taxon>Pseudomonadati</taxon>
        <taxon>Pseudomonadota</taxon>
        <taxon>Alphaproteobacteria</taxon>
        <taxon>Hyphomicrobiales</taxon>
        <taxon>Nitrobacteraceae</taxon>
        <taxon>Bradyrhizobium</taxon>
    </lineage>
</organism>
<reference key="1">
    <citation type="journal article" date="2007" name="Science">
        <title>Legumes symbioses: absence of nod genes in photosynthetic bradyrhizobia.</title>
        <authorList>
            <person name="Giraud E."/>
            <person name="Moulin L."/>
            <person name="Vallenet D."/>
            <person name="Barbe V."/>
            <person name="Cytryn E."/>
            <person name="Avarre J.-C."/>
            <person name="Jaubert M."/>
            <person name="Simon D."/>
            <person name="Cartieaux F."/>
            <person name="Prin Y."/>
            <person name="Bena G."/>
            <person name="Hannibal L."/>
            <person name="Fardoux J."/>
            <person name="Kojadinovic M."/>
            <person name="Vuillet L."/>
            <person name="Lajus A."/>
            <person name="Cruveiller S."/>
            <person name="Rouy Z."/>
            <person name="Mangenot S."/>
            <person name="Segurens B."/>
            <person name="Dossat C."/>
            <person name="Franck W.L."/>
            <person name="Chang W.-S."/>
            <person name="Saunders E."/>
            <person name="Bruce D."/>
            <person name="Richardson P."/>
            <person name="Normand P."/>
            <person name="Dreyfus B."/>
            <person name="Pignol D."/>
            <person name="Stacey G."/>
            <person name="Emerich D."/>
            <person name="Vermeglio A."/>
            <person name="Medigue C."/>
            <person name="Sadowsky M."/>
        </authorList>
    </citation>
    <scope>NUCLEOTIDE SEQUENCE [LARGE SCALE GENOMIC DNA]</scope>
    <source>
        <strain>BTAi1 / ATCC BAA-1182</strain>
    </source>
</reference>
<accession>A5EHG2</accession>